<keyword id="KW-0378">Hydrolase</keyword>
<sequence length="152" mass="17212">MTSPDHWLKLERQVHFGDTDAAGVMHFHQLLRWCHEAWEESLERYGIAAGSVFPGCRGQQRWPAVALPVVHCQADFKRPVHGSDRLQVHLKPQRLDPGCFEVRSEFHLDATVMACGLVRHLAIHSDSRERCALPETVDLWLEASALGQITSL</sequence>
<organism>
    <name type="scientific">Parasynechococcus marenigrum (strain WH8102)</name>
    <dbReference type="NCBI Taxonomy" id="84588"/>
    <lineage>
        <taxon>Bacteria</taxon>
        <taxon>Bacillati</taxon>
        <taxon>Cyanobacteriota</taxon>
        <taxon>Cyanophyceae</taxon>
        <taxon>Synechococcales</taxon>
        <taxon>Prochlorococcaceae</taxon>
        <taxon>Parasynechococcus</taxon>
        <taxon>Parasynechococcus marenigrum</taxon>
    </lineage>
</organism>
<proteinExistence type="inferred from homology"/>
<protein>
    <recommendedName>
        <fullName evidence="1">1,4-dihydroxy-2-naphthoyl-CoA hydrolase</fullName>
        <shortName evidence="1">DHNA-CoA hydrolase</shortName>
        <ecNumber evidence="1">3.1.2.28</ecNumber>
    </recommendedName>
    <alternativeName>
        <fullName evidence="1">DHNA-CoA thioesterase</fullName>
    </alternativeName>
</protein>
<gene>
    <name type="ordered locus">SYNW2301</name>
</gene>
<name>DNCH_PARMW</name>
<feature type="chain" id="PRO_0000377035" description="1,4-dihydroxy-2-naphthoyl-CoA hydrolase">
    <location>
        <begin position="1"/>
        <end position="152"/>
    </location>
</feature>
<feature type="active site" evidence="1">
    <location>
        <position position="20"/>
    </location>
</feature>
<reference key="1">
    <citation type="journal article" date="2003" name="Nature">
        <title>The genome of a motile marine Synechococcus.</title>
        <authorList>
            <person name="Palenik B."/>
            <person name="Brahamsha B."/>
            <person name="Larimer F.W."/>
            <person name="Land M.L."/>
            <person name="Hauser L."/>
            <person name="Chain P."/>
            <person name="Lamerdin J.E."/>
            <person name="Regala W."/>
            <person name="Allen E.E."/>
            <person name="McCarren J."/>
            <person name="Paulsen I.T."/>
            <person name="Dufresne A."/>
            <person name="Partensky F."/>
            <person name="Webb E.A."/>
            <person name="Waterbury J."/>
        </authorList>
    </citation>
    <scope>NUCLEOTIDE SEQUENCE [LARGE SCALE GENOMIC DNA]</scope>
    <source>
        <strain>WH8102</strain>
    </source>
</reference>
<evidence type="ECO:0000255" key="1">
    <source>
        <dbReference type="HAMAP-Rule" id="MF_02101"/>
    </source>
</evidence>
<accession>Q7U3X6</accession>
<comment type="function">
    <text evidence="1">Catalyzes the hydrolysis of 1,4-dihydroxy-2-naphthoyl-CoA (DHNA-CoA) to 1,4-dihydroxy-2-naphthoate (DHNA), a reaction involved in phylloquinone (vitamin K1) biosynthesis.</text>
</comment>
<comment type="catalytic activity">
    <reaction evidence="1">
        <text>1,4-dihydroxy-2-naphthoyl-CoA + H2O = 1,4-dihydroxy-2-naphthoate + CoA + H(+)</text>
        <dbReference type="Rhea" id="RHEA:26309"/>
        <dbReference type="ChEBI" id="CHEBI:11173"/>
        <dbReference type="ChEBI" id="CHEBI:15377"/>
        <dbReference type="ChEBI" id="CHEBI:15378"/>
        <dbReference type="ChEBI" id="CHEBI:57287"/>
        <dbReference type="ChEBI" id="CHEBI:58897"/>
        <dbReference type="EC" id="3.1.2.28"/>
    </reaction>
</comment>
<comment type="pathway">
    <text evidence="1">Cofactor biosynthesis; phylloquinone biosynthesis.</text>
</comment>
<comment type="pathway">
    <text evidence="1">Quinol/quinone metabolism; 1,4-dihydroxy-2-naphthoate biosynthesis; 1,4-dihydroxy-2-naphthoate from chorismate: step 7/7.</text>
</comment>
<comment type="similarity">
    <text evidence="1">Belongs to the 4-hydroxybenzoyl-CoA thioesterase family. DHNA-CoA hydrolase subfamily.</text>
</comment>
<dbReference type="EC" id="3.1.2.28" evidence="1"/>
<dbReference type="EMBL" id="BX569695">
    <property type="protein sequence ID" value="CAE08816.1"/>
    <property type="molecule type" value="Genomic_DNA"/>
</dbReference>
<dbReference type="RefSeq" id="WP_011129154.1">
    <property type="nucleotide sequence ID" value="NC_005070.1"/>
</dbReference>
<dbReference type="SMR" id="Q7U3X6"/>
<dbReference type="STRING" id="84588.SYNW2301"/>
<dbReference type="KEGG" id="syw:SYNW2301"/>
<dbReference type="eggNOG" id="COG0824">
    <property type="taxonomic scope" value="Bacteria"/>
</dbReference>
<dbReference type="HOGENOM" id="CLU_101141_5_3_3"/>
<dbReference type="UniPathway" id="UPA00995"/>
<dbReference type="UniPathway" id="UPA01057">
    <property type="reaction ID" value="UER01033"/>
</dbReference>
<dbReference type="Proteomes" id="UP000001422">
    <property type="component" value="Chromosome"/>
</dbReference>
<dbReference type="GO" id="GO:0061522">
    <property type="term" value="F:1,4-dihydroxy-2-naphthoyl-CoA thioesterase activity"/>
    <property type="evidence" value="ECO:0007669"/>
    <property type="project" value="UniProtKB-EC"/>
</dbReference>
<dbReference type="GO" id="GO:0042372">
    <property type="term" value="P:phylloquinone biosynthetic process"/>
    <property type="evidence" value="ECO:0007669"/>
    <property type="project" value="UniProtKB-UniRule"/>
</dbReference>
<dbReference type="CDD" id="cd00586">
    <property type="entry name" value="4HBT"/>
    <property type="match status" value="1"/>
</dbReference>
<dbReference type="Gene3D" id="3.10.129.10">
    <property type="entry name" value="Hotdog Thioesterase"/>
    <property type="match status" value="1"/>
</dbReference>
<dbReference type="HAMAP" id="MF_02101">
    <property type="entry name" value="DHNA_CoA_hydrolase"/>
    <property type="match status" value="1"/>
</dbReference>
<dbReference type="InterPro" id="IPR022829">
    <property type="entry name" value="DHNA_CoA_hydrolase"/>
</dbReference>
<dbReference type="InterPro" id="IPR029069">
    <property type="entry name" value="HotDog_dom_sf"/>
</dbReference>
<dbReference type="Pfam" id="PF13279">
    <property type="entry name" value="4HBT_2"/>
    <property type="match status" value="1"/>
</dbReference>
<dbReference type="SUPFAM" id="SSF54637">
    <property type="entry name" value="Thioesterase/thiol ester dehydrase-isomerase"/>
    <property type="match status" value="1"/>
</dbReference>